<reference key="1">
    <citation type="journal article" date="2008" name="J. Bacteriol.">
        <title>Complete genome sequence of uropathogenic Proteus mirabilis, a master of both adherence and motility.</title>
        <authorList>
            <person name="Pearson M.M."/>
            <person name="Sebaihia M."/>
            <person name="Churcher C."/>
            <person name="Quail M.A."/>
            <person name="Seshasayee A.S."/>
            <person name="Luscombe N.M."/>
            <person name="Abdellah Z."/>
            <person name="Arrosmith C."/>
            <person name="Atkin B."/>
            <person name="Chillingworth T."/>
            <person name="Hauser H."/>
            <person name="Jagels K."/>
            <person name="Moule S."/>
            <person name="Mungall K."/>
            <person name="Norbertczak H."/>
            <person name="Rabbinowitsch E."/>
            <person name="Walker D."/>
            <person name="Whithead S."/>
            <person name="Thomson N.R."/>
            <person name="Rather P.N."/>
            <person name="Parkhill J."/>
            <person name="Mobley H.L.T."/>
        </authorList>
    </citation>
    <scope>NUCLEOTIDE SEQUENCE [LARGE SCALE GENOMIC DNA]</scope>
    <source>
        <strain>HI4320</strain>
    </source>
</reference>
<organism>
    <name type="scientific">Proteus mirabilis (strain HI4320)</name>
    <dbReference type="NCBI Taxonomy" id="529507"/>
    <lineage>
        <taxon>Bacteria</taxon>
        <taxon>Pseudomonadati</taxon>
        <taxon>Pseudomonadota</taxon>
        <taxon>Gammaproteobacteria</taxon>
        <taxon>Enterobacterales</taxon>
        <taxon>Morganellaceae</taxon>
        <taxon>Proteus</taxon>
    </lineage>
</organism>
<sequence>MSNVDPSLLILLVLAGLGIISHNMTVTLAMIFLLVIKITPLNQYFPLVEKYGMTIGILILTIGVMTPIATGRISAQEVFNSFLNWKSLLAIAIGIIVSWLGARGVSLMNNQPSTVAGLLVGTVIGVALFRGVPVGPLIAAGILSLLIGKS</sequence>
<name>Y1560_PROMH</name>
<accession>B4EY74</accession>
<protein>
    <recommendedName>
        <fullName evidence="1">UPF0756 membrane protein PMI1560</fullName>
    </recommendedName>
</protein>
<comment type="subcellular location">
    <subcellularLocation>
        <location evidence="1">Cell membrane</location>
        <topology evidence="1">Multi-pass membrane protein</topology>
    </subcellularLocation>
</comment>
<comment type="similarity">
    <text evidence="1">Belongs to the UPF0756 family.</text>
</comment>
<dbReference type="EMBL" id="AM942759">
    <property type="protein sequence ID" value="CAR43271.1"/>
    <property type="molecule type" value="Genomic_DNA"/>
</dbReference>
<dbReference type="RefSeq" id="WP_012368034.1">
    <property type="nucleotide sequence ID" value="NC_010554.1"/>
</dbReference>
<dbReference type="EnsemblBacteria" id="CAR43271">
    <property type="protein sequence ID" value="CAR43271"/>
    <property type="gene ID" value="PMI1560"/>
</dbReference>
<dbReference type="GeneID" id="6802946"/>
<dbReference type="KEGG" id="pmr:PMI1560"/>
<dbReference type="PATRIC" id="fig|529507.6.peg.1509"/>
<dbReference type="eggNOG" id="COG2707">
    <property type="taxonomic scope" value="Bacteria"/>
</dbReference>
<dbReference type="HOGENOM" id="CLU_125889_0_0_6"/>
<dbReference type="Proteomes" id="UP000008319">
    <property type="component" value="Chromosome"/>
</dbReference>
<dbReference type="GO" id="GO:0005886">
    <property type="term" value="C:plasma membrane"/>
    <property type="evidence" value="ECO:0007669"/>
    <property type="project" value="UniProtKB-SubCell"/>
</dbReference>
<dbReference type="HAMAP" id="MF_01874">
    <property type="entry name" value="UPF0756"/>
    <property type="match status" value="1"/>
</dbReference>
<dbReference type="InterPro" id="IPR007382">
    <property type="entry name" value="UPF0756_TM"/>
</dbReference>
<dbReference type="PANTHER" id="PTHR38452">
    <property type="entry name" value="UPF0756 MEMBRANE PROTEIN YEAL"/>
    <property type="match status" value="1"/>
</dbReference>
<dbReference type="PANTHER" id="PTHR38452:SF1">
    <property type="entry name" value="UPF0756 MEMBRANE PROTEIN YEAL"/>
    <property type="match status" value="1"/>
</dbReference>
<dbReference type="Pfam" id="PF04284">
    <property type="entry name" value="DUF441"/>
    <property type="match status" value="1"/>
</dbReference>
<evidence type="ECO:0000255" key="1">
    <source>
        <dbReference type="HAMAP-Rule" id="MF_01874"/>
    </source>
</evidence>
<feature type="chain" id="PRO_0000388920" description="UPF0756 membrane protein PMI1560">
    <location>
        <begin position="1"/>
        <end position="150"/>
    </location>
</feature>
<feature type="transmembrane region" description="Helical" evidence="1">
    <location>
        <begin position="16"/>
        <end position="36"/>
    </location>
</feature>
<feature type="transmembrane region" description="Helical" evidence="1">
    <location>
        <begin position="51"/>
        <end position="71"/>
    </location>
</feature>
<feature type="transmembrane region" description="Helical" evidence="1">
    <location>
        <begin position="82"/>
        <end position="102"/>
    </location>
</feature>
<feature type="transmembrane region" description="Helical" evidence="1">
    <location>
        <begin position="123"/>
        <end position="143"/>
    </location>
</feature>
<proteinExistence type="inferred from homology"/>
<keyword id="KW-1003">Cell membrane</keyword>
<keyword id="KW-0472">Membrane</keyword>
<keyword id="KW-1185">Reference proteome</keyword>
<keyword id="KW-0812">Transmembrane</keyword>
<keyword id="KW-1133">Transmembrane helix</keyword>
<gene>
    <name type="ordered locus">PMI1560</name>
</gene>